<feature type="chain" id="PRO_0000170726" description="Mannitol-1-phosphate 5-dehydrogenase">
    <location>
        <begin position="1"/>
        <end position="378"/>
    </location>
</feature>
<feature type="binding site" evidence="1">
    <location>
        <begin position="4"/>
        <end position="15"/>
    </location>
    <ligand>
        <name>NAD(+)</name>
        <dbReference type="ChEBI" id="CHEBI:57540"/>
    </ligand>
</feature>
<dbReference type="EC" id="1.1.1.17" evidence="1"/>
<dbReference type="EMBL" id="AE005672">
    <property type="protein sequence ID" value="AAK74561.1"/>
    <property type="molecule type" value="Genomic_DNA"/>
</dbReference>
<dbReference type="PIR" id="H95045">
    <property type="entry name" value="H95045"/>
</dbReference>
<dbReference type="RefSeq" id="WP_000682969.1">
    <property type="nucleotide sequence ID" value="NC_003028.3"/>
</dbReference>
<dbReference type="SMR" id="Q97SH1"/>
<dbReference type="PaxDb" id="170187-SP_0397"/>
<dbReference type="EnsemblBacteria" id="AAK74561">
    <property type="protein sequence ID" value="AAK74561"/>
    <property type="gene ID" value="SP_0397"/>
</dbReference>
<dbReference type="KEGG" id="spn:SP_0397"/>
<dbReference type="eggNOG" id="COG0246">
    <property type="taxonomic scope" value="Bacteria"/>
</dbReference>
<dbReference type="PhylomeDB" id="Q97SH1"/>
<dbReference type="BioCyc" id="SPNE170187:G1FZB-413-MONOMER"/>
<dbReference type="Proteomes" id="UP000000585">
    <property type="component" value="Chromosome"/>
</dbReference>
<dbReference type="GO" id="GO:0005829">
    <property type="term" value="C:cytosol"/>
    <property type="evidence" value="ECO:0007669"/>
    <property type="project" value="TreeGrafter"/>
</dbReference>
<dbReference type="GO" id="GO:0008926">
    <property type="term" value="F:mannitol-1-phosphate 5-dehydrogenase activity"/>
    <property type="evidence" value="ECO:0007669"/>
    <property type="project" value="UniProtKB-UniRule"/>
</dbReference>
<dbReference type="GO" id="GO:0019592">
    <property type="term" value="P:mannitol catabolic process"/>
    <property type="evidence" value="ECO:0007669"/>
    <property type="project" value="TreeGrafter"/>
</dbReference>
<dbReference type="FunFam" id="3.40.50.720:FF:000586">
    <property type="entry name" value="Mannitol-1-phosphate 5-dehydrogenase"/>
    <property type="match status" value="1"/>
</dbReference>
<dbReference type="Gene3D" id="1.10.1040.10">
    <property type="entry name" value="N-(1-d-carboxylethyl)-l-norvaline Dehydrogenase, domain 2"/>
    <property type="match status" value="1"/>
</dbReference>
<dbReference type="Gene3D" id="3.40.50.720">
    <property type="entry name" value="NAD(P)-binding Rossmann-like Domain"/>
    <property type="match status" value="1"/>
</dbReference>
<dbReference type="HAMAP" id="MF_00196">
    <property type="entry name" value="Mannitol_dehydrog"/>
    <property type="match status" value="1"/>
</dbReference>
<dbReference type="InterPro" id="IPR008927">
    <property type="entry name" value="6-PGluconate_DH-like_C_sf"/>
</dbReference>
<dbReference type="InterPro" id="IPR013328">
    <property type="entry name" value="6PGD_dom2"/>
</dbReference>
<dbReference type="InterPro" id="IPR023028">
    <property type="entry name" value="Mannitol_1_phos_5_DH"/>
</dbReference>
<dbReference type="InterPro" id="IPR000669">
    <property type="entry name" value="Mannitol_DH"/>
</dbReference>
<dbReference type="InterPro" id="IPR013118">
    <property type="entry name" value="Mannitol_DH_C"/>
</dbReference>
<dbReference type="InterPro" id="IPR023027">
    <property type="entry name" value="Mannitol_DH_CS"/>
</dbReference>
<dbReference type="InterPro" id="IPR013131">
    <property type="entry name" value="Mannitol_DH_N"/>
</dbReference>
<dbReference type="InterPro" id="IPR036291">
    <property type="entry name" value="NAD(P)-bd_dom_sf"/>
</dbReference>
<dbReference type="NCBIfam" id="NF002647">
    <property type="entry name" value="PRK02318.1-3"/>
    <property type="match status" value="1"/>
</dbReference>
<dbReference type="NCBIfam" id="NF002652">
    <property type="entry name" value="PRK02318.2-5"/>
    <property type="match status" value="1"/>
</dbReference>
<dbReference type="PANTHER" id="PTHR30524:SF0">
    <property type="entry name" value="ALTRONATE OXIDOREDUCTASE-RELATED"/>
    <property type="match status" value="1"/>
</dbReference>
<dbReference type="PANTHER" id="PTHR30524">
    <property type="entry name" value="MANNITOL-1-PHOSPHATE 5-DEHYDROGENASE"/>
    <property type="match status" value="1"/>
</dbReference>
<dbReference type="Pfam" id="PF01232">
    <property type="entry name" value="Mannitol_dh"/>
    <property type="match status" value="1"/>
</dbReference>
<dbReference type="Pfam" id="PF08125">
    <property type="entry name" value="Mannitol_dh_C"/>
    <property type="match status" value="1"/>
</dbReference>
<dbReference type="PRINTS" id="PR00084">
    <property type="entry name" value="MTLDHDRGNASE"/>
</dbReference>
<dbReference type="SUPFAM" id="SSF48179">
    <property type="entry name" value="6-phosphogluconate dehydrogenase C-terminal domain-like"/>
    <property type="match status" value="1"/>
</dbReference>
<dbReference type="SUPFAM" id="SSF51735">
    <property type="entry name" value="NAD(P)-binding Rossmann-fold domains"/>
    <property type="match status" value="1"/>
</dbReference>
<dbReference type="PROSITE" id="PS00974">
    <property type="entry name" value="MANNITOL_DHGENASE"/>
    <property type="match status" value="1"/>
</dbReference>
<gene>
    <name evidence="1" type="primary">mtlD</name>
    <name type="ordered locus">SP_0397</name>
</gene>
<reference key="1">
    <citation type="journal article" date="2001" name="Science">
        <title>Complete genome sequence of a virulent isolate of Streptococcus pneumoniae.</title>
        <authorList>
            <person name="Tettelin H."/>
            <person name="Nelson K.E."/>
            <person name="Paulsen I.T."/>
            <person name="Eisen J.A."/>
            <person name="Read T.D."/>
            <person name="Peterson S.N."/>
            <person name="Heidelberg J.F."/>
            <person name="DeBoy R.T."/>
            <person name="Haft D.H."/>
            <person name="Dodson R.J."/>
            <person name="Durkin A.S."/>
            <person name="Gwinn M.L."/>
            <person name="Kolonay J.F."/>
            <person name="Nelson W.C."/>
            <person name="Peterson J.D."/>
            <person name="Umayam L.A."/>
            <person name="White O."/>
            <person name="Salzberg S.L."/>
            <person name="Lewis M.R."/>
            <person name="Radune D."/>
            <person name="Holtzapple E.K."/>
            <person name="Khouri H.M."/>
            <person name="Wolf A.M."/>
            <person name="Utterback T.R."/>
            <person name="Hansen C.L."/>
            <person name="McDonald L.A."/>
            <person name="Feldblyum T.V."/>
            <person name="Angiuoli S.V."/>
            <person name="Dickinson T."/>
            <person name="Hickey E.K."/>
            <person name="Holt I.E."/>
            <person name="Loftus B.J."/>
            <person name="Yang F."/>
            <person name="Smith H.O."/>
            <person name="Venter J.C."/>
            <person name="Dougherty B.A."/>
            <person name="Morrison D.A."/>
            <person name="Hollingshead S.K."/>
            <person name="Fraser C.M."/>
        </authorList>
    </citation>
    <scope>NUCLEOTIDE SEQUENCE [LARGE SCALE GENOMIC DNA]</scope>
    <source>
        <strain>ATCC BAA-334 / TIGR4</strain>
    </source>
</reference>
<name>MTLD_STRPN</name>
<sequence>MKHSVHFGAGNIGRGFIGEILFKNGFHIDFVDVNNQIIHALNEKGKYEIEIAQKGQSRIEVTNVAGINSKEHPEQVIEAIQKTDIITTAIGPNILPFIAELLAKGIEARRVAGNTQALDVMACENMIGGSQFLYQEVKKYLSPEGLTFADNYIGFPNAAVDRIVPAQSHEDSLFVVVEPFNEWVVETKRLKNPDLRLKDVHYEEDLEPFIERKLFSVNSGHATSAYIGAHYGAKTILEALQNPNIKSRIESVLAEIRSLLIAKWNFDKKELENYHKVIIERLENPFIVDEVSRVARTPIRKLGYNERFIRPIRELKELSLSYKNLLKTVGYVFDYRDVNDEESIRLGELLAKQSVKDVVIQVTGLDDQELIEQIVEYI</sequence>
<protein>
    <recommendedName>
        <fullName evidence="1">Mannitol-1-phosphate 5-dehydrogenase</fullName>
        <ecNumber evidence="1">1.1.1.17</ecNumber>
    </recommendedName>
</protein>
<organism>
    <name type="scientific">Streptococcus pneumoniae serotype 4 (strain ATCC BAA-334 / TIGR4)</name>
    <dbReference type="NCBI Taxonomy" id="170187"/>
    <lineage>
        <taxon>Bacteria</taxon>
        <taxon>Bacillati</taxon>
        <taxon>Bacillota</taxon>
        <taxon>Bacilli</taxon>
        <taxon>Lactobacillales</taxon>
        <taxon>Streptococcaceae</taxon>
        <taxon>Streptococcus</taxon>
    </lineage>
</organism>
<evidence type="ECO:0000255" key="1">
    <source>
        <dbReference type="HAMAP-Rule" id="MF_00196"/>
    </source>
</evidence>
<comment type="catalytic activity">
    <reaction evidence="1">
        <text>D-mannitol 1-phosphate + NAD(+) = beta-D-fructose 6-phosphate + NADH + H(+)</text>
        <dbReference type="Rhea" id="RHEA:19661"/>
        <dbReference type="ChEBI" id="CHEBI:15378"/>
        <dbReference type="ChEBI" id="CHEBI:57540"/>
        <dbReference type="ChEBI" id="CHEBI:57634"/>
        <dbReference type="ChEBI" id="CHEBI:57945"/>
        <dbReference type="ChEBI" id="CHEBI:61381"/>
        <dbReference type="EC" id="1.1.1.17"/>
    </reaction>
</comment>
<comment type="similarity">
    <text evidence="1">Belongs to the mannitol dehydrogenase family.</text>
</comment>
<keyword id="KW-0520">NAD</keyword>
<keyword id="KW-0560">Oxidoreductase</keyword>
<keyword id="KW-1185">Reference proteome</keyword>
<accession>Q97SH1</accession>
<proteinExistence type="inferred from homology"/>